<sequence>MPFHPVTAALMYRGIYTVPNLLSEQRPVDIPEDELEEIREAFKVFDRDGNGFISKQELGTAMRSLGYMPNEVELEVIIQRLDMDGDGQVDFEEFVTLLGPKLSTSGIPEKFHGTDFDTVFWKCDMQKLTVDELKRLLYDTFCEHLSMKDIENIIMTEEESHLGTAEECPVDVETCSNQQIRQTCVRKSLICAFAIAFIISVMLIAANQVLRSGMK</sequence>
<keyword id="KW-0106">Calcium</keyword>
<keyword id="KW-1003">Cell membrane</keyword>
<keyword id="KW-0963">Cytoplasm</keyword>
<keyword id="KW-0333">Golgi apparatus</keyword>
<keyword id="KW-0472">Membrane</keyword>
<keyword id="KW-0479">Metal-binding</keyword>
<keyword id="KW-1185">Reference proteome</keyword>
<keyword id="KW-0677">Repeat</keyword>
<keyword id="KW-0812">Transmembrane</keyword>
<keyword id="KW-1133">Transmembrane helix</keyword>
<gene>
    <name type="primary">Cabp7</name>
    <name type="synonym">Caln2</name>
</gene>
<protein>
    <recommendedName>
        <fullName>Calcium-binding protein 7</fullName>
        <shortName>CaBP7</shortName>
    </recommendedName>
    <alternativeName>
        <fullName>Calneuron II</fullName>
    </alternativeName>
    <alternativeName>
        <fullName>Calneuron-2</fullName>
    </alternativeName>
</protein>
<reference key="1">
    <citation type="submission" date="2001-09" db="EMBL/GenBank/DDBJ databases">
        <title>Calcium-binding protein with similarity to calmodulin.</title>
        <authorList>
            <person name="Haeseleer F."/>
            <person name="Palczewski K."/>
        </authorList>
    </citation>
    <scope>NUCLEOTIDE SEQUENCE [MRNA]</scope>
    <source>
        <strain>C57BL/6J</strain>
        <tissue>Cerebellum</tissue>
    </source>
</reference>
<organism>
    <name type="scientific">Mus musculus</name>
    <name type="common">Mouse</name>
    <dbReference type="NCBI Taxonomy" id="10090"/>
    <lineage>
        <taxon>Eukaryota</taxon>
        <taxon>Metazoa</taxon>
        <taxon>Chordata</taxon>
        <taxon>Craniata</taxon>
        <taxon>Vertebrata</taxon>
        <taxon>Euteleostomi</taxon>
        <taxon>Mammalia</taxon>
        <taxon>Eutheria</taxon>
        <taxon>Euarchontoglires</taxon>
        <taxon>Glires</taxon>
        <taxon>Rodentia</taxon>
        <taxon>Myomorpha</taxon>
        <taxon>Muroidea</taxon>
        <taxon>Muridae</taxon>
        <taxon>Murinae</taxon>
        <taxon>Mus</taxon>
        <taxon>Mus</taxon>
    </lineage>
</organism>
<feature type="chain" id="PRO_0000073527" description="Calcium-binding protein 7">
    <location>
        <begin position="1"/>
        <end position="215"/>
    </location>
</feature>
<feature type="topological domain" description="Cytoplasmic" evidence="2">
    <location>
        <begin position="1"/>
        <end position="188"/>
    </location>
</feature>
<feature type="transmembrane region" description="Helical; Anchor for type IV membrane protein" evidence="2">
    <location>
        <begin position="189"/>
        <end position="209"/>
    </location>
</feature>
<feature type="topological domain" description="Extracellular" evidence="2">
    <location>
        <begin position="210"/>
        <end position="215"/>
    </location>
</feature>
<feature type="domain" description="EF-hand 1" evidence="3">
    <location>
        <begin position="33"/>
        <end position="68"/>
    </location>
</feature>
<feature type="domain" description="EF-hand 2" evidence="3">
    <location>
        <begin position="69"/>
        <end position="104"/>
    </location>
</feature>
<feature type="binding site" evidence="3">
    <location>
        <position position="46"/>
    </location>
    <ligand>
        <name>Ca(2+)</name>
        <dbReference type="ChEBI" id="CHEBI:29108"/>
        <label>1</label>
    </ligand>
</feature>
<feature type="binding site" evidence="3">
    <location>
        <position position="48"/>
    </location>
    <ligand>
        <name>Ca(2+)</name>
        <dbReference type="ChEBI" id="CHEBI:29108"/>
        <label>1</label>
    </ligand>
</feature>
<feature type="binding site" evidence="3">
    <location>
        <position position="50"/>
    </location>
    <ligand>
        <name>Ca(2+)</name>
        <dbReference type="ChEBI" id="CHEBI:29108"/>
        <label>1</label>
    </ligand>
</feature>
<feature type="binding site" evidence="3">
    <location>
        <position position="57"/>
    </location>
    <ligand>
        <name>Ca(2+)</name>
        <dbReference type="ChEBI" id="CHEBI:29108"/>
        <label>1</label>
    </ligand>
</feature>
<feature type="binding site" evidence="3">
    <location>
        <position position="82"/>
    </location>
    <ligand>
        <name>Ca(2+)</name>
        <dbReference type="ChEBI" id="CHEBI:29108"/>
        <label>2</label>
    </ligand>
</feature>
<feature type="binding site" evidence="3">
    <location>
        <position position="84"/>
    </location>
    <ligand>
        <name>Ca(2+)</name>
        <dbReference type="ChEBI" id="CHEBI:29108"/>
        <label>2</label>
    </ligand>
</feature>
<feature type="binding site" evidence="3">
    <location>
        <position position="86"/>
    </location>
    <ligand>
        <name>Ca(2+)</name>
        <dbReference type="ChEBI" id="CHEBI:29108"/>
        <label>2</label>
    </ligand>
</feature>
<feature type="binding site" evidence="3">
    <location>
        <position position="88"/>
    </location>
    <ligand>
        <name>Ca(2+)</name>
        <dbReference type="ChEBI" id="CHEBI:29108"/>
        <label>2</label>
    </ligand>
</feature>
<feature type="binding site" evidence="3">
    <location>
        <position position="93"/>
    </location>
    <ligand>
        <name>Ca(2+)</name>
        <dbReference type="ChEBI" id="CHEBI:29108"/>
        <label>2</label>
    </ligand>
</feature>
<name>CABP7_MOUSE</name>
<proteinExistence type="evidence at transcript level"/>
<dbReference type="EMBL" id="AF419324">
    <property type="protein sequence ID" value="AAL14997.1"/>
    <property type="molecule type" value="mRNA"/>
</dbReference>
<dbReference type="CCDS" id="CCDS24390.1"/>
<dbReference type="RefSeq" id="NP_620398.1">
    <property type="nucleotide sequence ID" value="NM_138948.4"/>
</dbReference>
<dbReference type="BMRB" id="Q91ZM8"/>
<dbReference type="SMR" id="Q91ZM8"/>
<dbReference type="FunCoup" id="Q91ZM8">
    <property type="interactions" value="128"/>
</dbReference>
<dbReference type="STRING" id="10090.ENSMUSP00000009219"/>
<dbReference type="iPTMnet" id="Q91ZM8"/>
<dbReference type="PhosphoSitePlus" id="Q91ZM8"/>
<dbReference type="jPOST" id="Q91ZM8"/>
<dbReference type="PaxDb" id="10090-ENSMUSP00000009219"/>
<dbReference type="ProteomicsDB" id="273819"/>
<dbReference type="Antibodypedia" id="24571">
    <property type="antibodies" value="113 antibodies from 28 providers"/>
</dbReference>
<dbReference type="DNASU" id="192650"/>
<dbReference type="Ensembl" id="ENSMUST00000009219.3">
    <property type="protein sequence ID" value="ENSMUSP00000009219.3"/>
    <property type="gene ID" value="ENSMUSG00000009075.3"/>
</dbReference>
<dbReference type="GeneID" id="192650"/>
<dbReference type="KEGG" id="mmu:192650"/>
<dbReference type="UCSC" id="uc007hve.1">
    <property type="organism name" value="mouse"/>
</dbReference>
<dbReference type="AGR" id="MGI:2183437"/>
<dbReference type="CTD" id="164633"/>
<dbReference type="MGI" id="MGI:2183437">
    <property type="gene designation" value="Cabp7"/>
</dbReference>
<dbReference type="VEuPathDB" id="HostDB:ENSMUSG00000009075"/>
<dbReference type="eggNOG" id="KOG0027">
    <property type="taxonomic scope" value="Eukaryota"/>
</dbReference>
<dbReference type="GeneTree" id="ENSGT00940000159368"/>
<dbReference type="HOGENOM" id="CLU_106115_0_0_1"/>
<dbReference type="InParanoid" id="Q91ZM8"/>
<dbReference type="OMA" id="TQQIKQT"/>
<dbReference type="OrthoDB" id="26525at2759"/>
<dbReference type="PhylomeDB" id="Q91ZM8"/>
<dbReference type="TreeFam" id="TF331025"/>
<dbReference type="BioGRID-ORCS" id="192650">
    <property type="hits" value="2 hits in 77 CRISPR screens"/>
</dbReference>
<dbReference type="PRO" id="PR:Q91ZM8"/>
<dbReference type="Proteomes" id="UP000000589">
    <property type="component" value="Chromosome 11"/>
</dbReference>
<dbReference type="RNAct" id="Q91ZM8">
    <property type="molecule type" value="protein"/>
</dbReference>
<dbReference type="Bgee" id="ENSMUSG00000009075">
    <property type="expression patterns" value="Expressed in pontine nuclear group and 71 other cell types or tissues"/>
</dbReference>
<dbReference type="ExpressionAtlas" id="Q91ZM8">
    <property type="expression patterns" value="baseline and differential"/>
</dbReference>
<dbReference type="GO" id="GO:0048471">
    <property type="term" value="C:perinuclear region of cytoplasm"/>
    <property type="evidence" value="ECO:0007669"/>
    <property type="project" value="UniProtKB-SubCell"/>
</dbReference>
<dbReference type="GO" id="GO:0005886">
    <property type="term" value="C:plasma membrane"/>
    <property type="evidence" value="ECO:0007669"/>
    <property type="project" value="UniProtKB-SubCell"/>
</dbReference>
<dbReference type="GO" id="GO:0032588">
    <property type="term" value="C:trans-Golgi network membrane"/>
    <property type="evidence" value="ECO:0000314"/>
    <property type="project" value="MGI"/>
</dbReference>
<dbReference type="GO" id="GO:0005509">
    <property type="term" value="F:calcium ion binding"/>
    <property type="evidence" value="ECO:0007669"/>
    <property type="project" value="InterPro"/>
</dbReference>
<dbReference type="CDD" id="cd00051">
    <property type="entry name" value="EFh"/>
    <property type="match status" value="1"/>
</dbReference>
<dbReference type="FunFam" id="1.10.238.10:FF:000115">
    <property type="entry name" value="Calcium-binding protein 8"/>
    <property type="match status" value="1"/>
</dbReference>
<dbReference type="Gene3D" id="1.10.238.10">
    <property type="entry name" value="EF-hand"/>
    <property type="match status" value="1"/>
</dbReference>
<dbReference type="InterPro" id="IPR051111">
    <property type="entry name" value="Ca-binding_regulatory"/>
</dbReference>
<dbReference type="InterPro" id="IPR011992">
    <property type="entry name" value="EF-hand-dom_pair"/>
</dbReference>
<dbReference type="InterPro" id="IPR018247">
    <property type="entry name" value="EF_Hand_1_Ca_BS"/>
</dbReference>
<dbReference type="InterPro" id="IPR002048">
    <property type="entry name" value="EF_hand_dom"/>
</dbReference>
<dbReference type="InterPro" id="IPR001751">
    <property type="entry name" value="S100/CaBP7/8-like_CS"/>
</dbReference>
<dbReference type="PANTHER" id="PTHR46311:SF1">
    <property type="entry name" value="CALCIUM-BINDING PROTEIN 7"/>
    <property type="match status" value="1"/>
</dbReference>
<dbReference type="PANTHER" id="PTHR46311">
    <property type="entry name" value="CALCIUM-BINDING PROTEIN 8-RELATED"/>
    <property type="match status" value="1"/>
</dbReference>
<dbReference type="Pfam" id="PF13499">
    <property type="entry name" value="EF-hand_7"/>
    <property type="match status" value="1"/>
</dbReference>
<dbReference type="SMART" id="SM00054">
    <property type="entry name" value="EFh"/>
    <property type="match status" value="2"/>
</dbReference>
<dbReference type="SUPFAM" id="SSF47473">
    <property type="entry name" value="EF-hand"/>
    <property type="match status" value="1"/>
</dbReference>
<dbReference type="PROSITE" id="PS00018">
    <property type="entry name" value="EF_HAND_1"/>
    <property type="match status" value="2"/>
</dbReference>
<dbReference type="PROSITE" id="PS50222">
    <property type="entry name" value="EF_HAND_2"/>
    <property type="match status" value="2"/>
</dbReference>
<accession>Q91ZM8</accession>
<comment type="function">
    <text evidence="1">Negatively regulates Golgi-to-plasma membrane trafficking by interacting with PI4KB and inhibiting its activity.</text>
</comment>
<comment type="subunit">
    <text evidence="1">Interacts with PI4KB. This binding competes with FREQ/NCS1 binding in a calcium-dependent manner (By similarity).</text>
</comment>
<comment type="subcellular location">
    <subcellularLocation>
        <location evidence="1">Golgi apparatus</location>
        <location evidence="1">trans-Golgi network membrane</location>
        <topology evidence="1">Single-pass type IV membrane protein</topology>
    </subcellularLocation>
    <subcellularLocation>
        <location evidence="1">Cytoplasm</location>
        <location evidence="1">Perinuclear region</location>
    </subcellularLocation>
    <subcellularLocation>
        <location evidence="1">Cell membrane</location>
        <topology evidence="1">Single-pass type IV membrane protein</topology>
    </subcellularLocation>
</comment>
<comment type="domain">
    <text evidence="1">The C-terminal transmembrane domain (TMD) is necessary and sufficient for membrane targeting.</text>
</comment>
<evidence type="ECO:0000250" key="1"/>
<evidence type="ECO:0000255" key="2"/>
<evidence type="ECO:0000255" key="3">
    <source>
        <dbReference type="PROSITE-ProRule" id="PRU00448"/>
    </source>
</evidence>